<sequence>MSETKNVRTLQGKVVSDKMDKTVTVLVERKVKHPLYGKIIRLSTKIHAHDENNQYGIGDVVVISESRPLSKTKSWVVSELVEKARSI</sequence>
<comment type="function">
    <text evidence="1">One of the primary rRNA binding proteins, it binds specifically to the 5'-end of 16S ribosomal RNA.</text>
</comment>
<comment type="subunit">
    <text evidence="1">Part of the 30S ribosomal subunit.</text>
</comment>
<comment type="similarity">
    <text evidence="1">Belongs to the universal ribosomal protein uS17 family.</text>
</comment>
<keyword id="KW-0687">Ribonucleoprotein</keyword>
<keyword id="KW-0689">Ribosomal protein</keyword>
<keyword id="KW-0694">RNA-binding</keyword>
<keyword id="KW-0699">rRNA-binding</keyword>
<feature type="chain" id="PRO_1000086846" description="Small ribosomal subunit protein uS17">
    <location>
        <begin position="1"/>
        <end position="87"/>
    </location>
</feature>
<proteinExistence type="inferred from homology"/>
<accession>A9M3V7</accession>
<protein>
    <recommendedName>
        <fullName evidence="1">Small ribosomal subunit protein uS17</fullName>
    </recommendedName>
    <alternativeName>
        <fullName evidence="2">30S ribosomal protein S17</fullName>
    </alternativeName>
</protein>
<evidence type="ECO:0000255" key="1">
    <source>
        <dbReference type="HAMAP-Rule" id="MF_01345"/>
    </source>
</evidence>
<evidence type="ECO:0000305" key="2"/>
<reference key="1">
    <citation type="journal article" date="2008" name="Genomics">
        <title>Characterization of ST-4821 complex, a unique Neisseria meningitidis clone.</title>
        <authorList>
            <person name="Peng J."/>
            <person name="Yang L."/>
            <person name="Yang F."/>
            <person name="Yang J."/>
            <person name="Yan Y."/>
            <person name="Nie H."/>
            <person name="Zhang X."/>
            <person name="Xiong Z."/>
            <person name="Jiang Y."/>
            <person name="Cheng F."/>
            <person name="Xu X."/>
            <person name="Chen S."/>
            <person name="Sun L."/>
            <person name="Li W."/>
            <person name="Shen Y."/>
            <person name="Shao Z."/>
            <person name="Liang X."/>
            <person name="Xu J."/>
            <person name="Jin Q."/>
        </authorList>
    </citation>
    <scope>NUCLEOTIDE SEQUENCE [LARGE SCALE GENOMIC DNA]</scope>
    <source>
        <strain>053442</strain>
    </source>
</reference>
<name>RS17_NEIM0</name>
<organism>
    <name type="scientific">Neisseria meningitidis serogroup C (strain 053442)</name>
    <dbReference type="NCBI Taxonomy" id="374833"/>
    <lineage>
        <taxon>Bacteria</taxon>
        <taxon>Pseudomonadati</taxon>
        <taxon>Pseudomonadota</taxon>
        <taxon>Betaproteobacteria</taxon>
        <taxon>Neisseriales</taxon>
        <taxon>Neisseriaceae</taxon>
        <taxon>Neisseria</taxon>
    </lineage>
</organism>
<dbReference type="EMBL" id="CP000381">
    <property type="protein sequence ID" value="ABX74119.1"/>
    <property type="molecule type" value="Genomic_DNA"/>
</dbReference>
<dbReference type="RefSeq" id="WP_002215433.1">
    <property type="nucleotide sequence ID" value="NC_010120.1"/>
</dbReference>
<dbReference type="SMR" id="A9M3V7"/>
<dbReference type="GeneID" id="93387226"/>
<dbReference type="KEGG" id="nmn:NMCC_1996"/>
<dbReference type="HOGENOM" id="CLU_073626_1_1_4"/>
<dbReference type="Proteomes" id="UP000001177">
    <property type="component" value="Chromosome"/>
</dbReference>
<dbReference type="GO" id="GO:0022627">
    <property type="term" value="C:cytosolic small ribosomal subunit"/>
    <property type="evidence" value="ECO:0007669"/>
    <property type="project" value="TreeGrafter"/>
</dbReference>
<dbReference type="GO" id="GO:0019843">
    <property type="term" value="F:rRNA binding"/>
    <property type="evidence" value="ECO:0007669"/>
    <property type="project" value="UniProtKB-UniRule"/>
</dbReference>
<dbReference type="GO" id="GO:0003735">
    <property type="term" value="F:structural constituent of ribosome"/>
    <property type="evidence" value="ECO:0007669"/>
    <property type="project" value="InterPro"/>
</dbReference>
<dbReference type="GO" id="GO:0006412">
    <property type="term" value="P:translation"/>
    <property type="evidence" value="ECO:0007669"/>
    <property type="project" value="UniProtKB-UniRule"/>
</dbReference>
<dbReference type="CDD" id="cd00364">
    <property type="entry name" value="Ribosomal_uS17"/>
    <property type="match status" value="1"/>
</dbReference>
<dbReference type="FunFam" id="2.40.50.140:FF:000014">
    <property type="entry name" value="30S ribosomal protein S17"/>
    <property type="match status" value="1"/>
</dbReference>
<dbReference type="Gene3D" id="2.40.50.140">
    <property type="entry name" value="Nucleic acid-binding proteins"/>
    <property type="match status" value="1"/>
</dbReference>
<dbReference type="HAMAP" id="MF_01345_B">
    <property type="entry name" value="Ribosomal_uS17_B"/>
    <property type="match status" value="1"/>
</dbReference>
<dbReference type="InterPro" id="IPR012340">
    <property type="entry name" value="NA-bd_OB-fold"/>
</dbReference>
<dbReference type="InterPro" id="IPR000266">
    <property type="entry name" value="Ribosomal_uS17"/>
</dbReference>
<dbReference type="InterPro" id="IPR019984">
    <property type="entry name" value="Ribosomal_uS17_bact/chlr"/>
</dbReference>
<dbReference type="InterPro" id="IPR019979">
    <property type="entry name" value="Ribosomal_uS17_CS"/>
</dbReference>
<dbReference type="NCBIfam" id="NF004123">
    <property type="entry name" value="PRK05610.1"/>
    <property type="match status" value="1"/>
</dbReference>
<dbReference type="NCBIfam" id="TIGR03635">
    <property type="entry name" value="uS17_bact"/>
    <property type="match status" value="1"/>
</dbReference>
<dbReference type="PANTHER" id="PTHR10744">
    <property type="entry name" value="40S RIBOSOMAL PROTEIN S11 FAMILY MEMBER"/>
    <property type="match status" value="1"/>
</dbReference>
<dbReference type="PANTHER" id="PTHR10744:SF1">
    <property type="entry name" value="SMALL RIBOSOMAL SUBUNIT PROTEIN US17M"/>
    <property type="match status" value="1"/>
</dbReference>
<dbReference type="Pfam" id="PF00366">
    <property type="entry name" value="Ribosomal_S17"/>
    <property type="match status" value="1"/>
</dbReference>
<dbReference type="PRINTS" id="PR00973">
    <property type="entry name" value="RIBOSOMALS17"/>
</dbReference>
<dbReference type="SUPFAM" id="SSF50249">
    <property type="entry name" value="Nucleic acid-binding proteins"/>
    <property type="match status" value="1"/>
</dbReference>
<dbReference type="PROSITE" id="PS00056">
    <property type="entry name" value="RIBOSOMAL_S17"/>
    <property type="match status" value="1"/>
</dbReference>
<gene>
    <name evidence="1" type="primary">rpsQ</name>
    <name type="ordered locus">NMCC_1996</name>
</gene>